<accession>Q5HAW8</accession>
<accession>Q5FER8</accession>
<feature type="chain" id="PRO_0000224279" description="Adenylosuccinate synthetase">
    <location>
        <begin position="1"/>
        <end position="430"/>
    </location>
</feature>
<feature type="active site" description="Proton acceptor" evidence="1">
    <location>
        <position position="13"/>
    </location>
</feature>
<feature type="active site" description="Proton donor" evidence="1">
    <location>
        <position position="41"/>
    </location>
</feature>
<feature type="binding site" evidence="1">
    <location>
        <begin position="12"/>
        <end position="18"/>
    </location>
    <ligand>
        <name>GTP</name>
        <dbReference type="ChEBI" id="CHEBI:37565"/>
    </ligand>
</feature>
<feature type="binding site" description="in other chain" evidence="1">
    <location>
        <begin position="13"/>
        <end position="16"/>
    </location>
    <ligand>
        <name>IMP</name>
        <dbReference type="ChEBI" id="CHEBI:58053"/>
        <note>ligand shared between dimeric partners</note>
    </ligand>
</feature>
<feature type="binding site" evidence="1">
    <location>
        <position position="13"/>
    </location>
    <ligand>
        <name>Mg(2+)</name>
        <dbReference type="ChEBI" id="CHEBI:18420"/>
    </ligand>
</feature>
<feature type="binding site" description="in other chain" evidence="1">
    <location>
        <begin position="38"/>
        <end position="41"/>
    </location>
    <ligand>
        <name>IMP</name>
        <dbReference type="ChEBI" id="CHEBI:58053"/>
        <note>ligand shared between dimeric partners</note>
    </ligand>
</feature>
<feature type="binding site" evidence="1">
    <location>
        <begin position="40"/>
        <end position="42"/>
    </location>
    <ligand>
        <name>GTP</name>
        <dbReference type="ChEBI" id="CHEBI:37565"/>
    </ligand>
</feature>
<feature type="binding site" evidence="1">
    <location>
        <position position="40"/>
    </location>
    <ligand>
        <name>Mg(2+)</name>
        <dbReference type="ChEBI" id="CHEBI:18420"/>
    </ligand>
</feature>
<feature type="binding site" description="in other chain" evidence="1">
    <location>
        <position position="129"/>
    </location>
    <ligand>
        <name>IMP</name>
        <dbReference type="ChEBI" id="CHEBI:58053"/>
        <note>ligand shared between dimeric partners</note>
    </ligand>
</feature>
<feature type="binding site" evidence="1">
    <location>
        <position position="143"/>
    </location>
    <ligand>
        <name>IMP</name>
        <dbReference type="ChEBI" id="CHEBI:58053"/>
        <note>ligand shared between dimeric partners</note>
    </ligand>
</feature>
<feature type="binding site" description="in other chain" evidence="1">
    <location>
        <position position="224"/>
    </location>
    <ligand>
        <name>IMP</name>
        <dbReference type="ChEBI" id="CHEBI:58053"/>
        <note>ligand shared between dimeric partners</note>
    </ligand>
</feature>
<feature type="binding site" description="in other chain" evidence="1">
    <location>
        <position position="239"/>
    </location>
    <ligand>
        <name>IMP</name>
        <dbReference type="ChEBI" id="CHEBI:58053"/>
        <note>ligand shared between dimeric partners</note>
    </ligand>
</feature>
<feature type="binding site" evidence="1">
    <location>
        <begin position="299"/>
        <end position="305"/>
    </location>
    <ligand>
        <name>substrate</name>
    </ligand>
</feature>
<feature type="binding site" description="in other chain" evidence="1">
    <location>
        <position position="303"/>
    </location>
    <ligand>
        <name>IMP</name>
        <dbReference type="ChEBI" id="CHEBI:58053"/>
        <note>ligand shared between dimeric partners</note>
    </ligand>
</feature>
<feature type="binding site" evidence="1">
    <location>
        <position position="305"/>
    </location>
    <ligand>
        <name>GTP</name>
        <dbReference type="ChEBI" id="CHEBI:37565"/>
    </ligand>
</feature>
<feature type="binding site" evidence="1">
    <location>
        <begin position="331"/>
        <end position="333"/>
    </location>
    <ligand>
        <name>GTP</name>
        <dbReference type="ChEBI" id="CHEBI:37565"/>
    </ligand>
</feature>
<feature type="binding site" evidence="1">
    <location>
        <begin position="413"/>
        <end position="415"/>
    </location>
    <ligand>
        <name>GTP</name>
        <dbReference type="ChEBI" id="CHEBI:37565"/>
    </ligand>
</feature>
<keyword id="KW-0963">Cytoplasm</keyword>
<keyword id="KW-0342">GTP-binding</keyword>
<keyword id="KW-0436">Ligase</keyword>
<keyword id="KW-0460">Magnesium</keyword>
<keyword id="KW-0479">Metal-binding</keyword>
<keyword id="KW-0547">Nucleotide-binding</keyword>
<keyword id="KW-0658">Purine biosynthesis</keyword>
<organism>
    <name type="scientific">Ehrlichia ruminantium (strain Welgevonden)</name>
    <dbReference type="NCBI Taxonomy" id="254945"/>
    <lineage>
        <taxon>Bacteria</taxon>
        <taxon>Pseudomonadati</taxon>
        <taxon>Pseudomonadota</taxon>
        <taxon>Alphaproteobacteria</taxon>
        <taxon>Rickettsiales</taxon>
        <taxon>Anaplasmataceae</taxon>
        <taxon>Ehrlichia</taxon>
    </lineage>
</organism>
<sequence>MTNIVVVGLQWGDEGKGKVVDWLSNNADAVVRFQGGNNAGHTIVIQEKTYKLNLLPSSILHNNKLSIIGNGVVLDPYALMSEIDNLRINGININTQNLVISESCPLVLNIHKEADTLFEQLRQNTIGTTNKGIGPCYADKISRRALRVCDLFDKKDILYNKVNNLLNYHNLLRQNFNILPIEASKLVDELLDIAPKILPFVKPVWKVIHDLTQQNKTIIFEGAQGTFLDIDHGTYPFVTSSNTIAPQAFVGGGINLSHSSCVLGVIKAYTTRVGNGPFFTEQKNEIGKSMFERGNEIGTVSNRERRCGWFDAVLAKQAIILSGVSGLVLTKLDVLDQFSEIKICTQYKYDGVIYDYIPASSYVQNNLEPIYETVPGWKENTFGSVTYEDLPKNAISYIKKIEEILKVPVYLISTGPERNAMIIINDKFLK</sequence>
<comment type="function">
    <text evidence="1">Plays an important role in the de novo pathway of purine nucleotide biosynthesis. Catalyzes the first committed step in the biosynthesis of AMP from IMP.</text>
</comment>
<comment type="catalytic activity">
    <reaction evidence="1">
        <text>IMP + L-aspartate + GTP = N(6)-(1,2-dicarboxyethyl)-AMP + GDP + phosphate + 2 H(+)</text>
        <dbReference type="Rhea" id="RHEA:15753"/>
        <dbReference type="ChEBI" id="CHEBI:15378"/>
        <dbReference type="ChEBI" id="CHEBI:29991"/>
        <dbReference type="ChEBI" id="CHEBI:37565"/>
        <dbReference type="ChEBI" id="CHEBI:43474"/>
        <dbReference type="ChEBI" id="CHEBI:57567"/>
        <dbReference type="ChEBI" id="CHEBI:58053"/>
        <dbReference type="ChEBI" id="CHEBI:58189"/>
        <dbReference type="EC" id="6.3.4.4"/>
    </reaction>
</comment>
<comment type="cofactor">
    <cofactor evidence="1">
        <name>Mg(2+)</name>
        <dbReference type="ChEBI" id="CHEBI:18420"/>
    </cofactor>
    <text evidence="1">Binds 1 Mg(2+) ion per subunit.</text>
</comment>
<comment type="pathway">
    <text evidence="1">Purine metabolism; AMP biosynthesis via de novo pathway; AMP from IMP: step 1/2.</text>
</comment>
<comment type="subunit">
    <text evidence="1">Homodimer.</text>
</comment>
<comment type="subcellular location">
    <subcellularLocation>
        <location evidence="1">Cytoplasm</location>
    </subcellularLocation>
</comment>
<comment type="similarity">
    <text evidence="1">Belongs to the adenylosuccinate synthetase family.</text>
</comment>
<reference key="1">
    <citation type="journal article" date="2005" name="Proc. Natl. Acad. Sci. U.S.A.">
        <title>The genome of the heartwater agent Ehrlichia ruminantium contains multiple tandem repeats of actively variable copy number.</title>
        <authorList>
            <person name="Collins N.E."/>
            <person name="Liebenberg J."/>
            <person name="de Villiers E.P."/>
            <person name="Brayton K.A."/>
            <person name="Louw E."/>
            <person name="Pretorius A."/>
            <person name="Faber F.E."/>
            <person name="van Heerden H."/>
            <person name="Josemans A."/>
            <person name="van Kleef M."/>
            <person name="Steyn H.C."/>
            <person name="van Strijp M.F."/>
            <person name="Zweygarth E."/>
            <person name="Jongejan F."/>
            <person name="Maillard J.C."/>
            <person name="Berthier D."/>
            <person name="Botha M."/>
            <person name="Joubert F."/>
            <person name="Corton C.H."/>
            <person name="Thomson N.R."/>
            <person name="Allsopp M.T."/>
            <person name="Allsopp B.A."/>
        </authorList>
    </citation>
    <scope>NUCLEOTIDE SEQUENCE [LARGE SCALE GENOMIC DNA]</scope>
    <source>
        <strain>Welgevonden</strain>
    </source>
</reference>
<reference key="2">
    <citation type="journal article" date="2006" name="J. Bacteriol.">
        <title>Comparative genomic analysis of three strains of Ehrlichia ruminantium reveals an active process of genome size plasticity.</title>
        <authorList>
            <person name="Frutos R."/>
            <person name="Viari A."/>
            <person name="Ferraz C."/>
            <person name="Morgat A."/>
            <person name="Eychenie S."/>
            <person name="Kandassamy Y."/>
            <person name="Chantal I."/>
            <person name="Bensaid A."/>
            <person name="Coissac E."/>
            <person name="Vachiery N."/>
            <person name="Demaille J."/>
            <person name="Martinez D."/>
        </authorList>
    </citation>
    <scope>NUCLEOTIDE SEQUENCE [LARGE SCALE GENOMIC DNA]</scope>
    <source>
        <strain>Welgevonden</strain>
    </source>
</reference>
<gene>
    <name evidence="1" type="primary">purA</name>
    <name type="ordered locus">Erum5630</name>
    <name type="ordered locus">ERWE_CDS_05900</name>
</gene>
<protein>
    <recommendedName>
        <fullName evidence="1">Adenylosuccinate synthetase</fullName>
        <shortName evidence="1">AMPSase</shortName>
        <shortName evidence="1">AdSS</shortName>
        <ecNumber evidence="1">6.3.4.4</ecNumber>
    </recommendedName>
    <alternativeName>
        <fullName evidence="1">IMP--aspartate ligase</fullName>
    </alternativeName>
</protein>
<evidence type="ECO:0000255" key="1">
    <source>
        <dbReference type="HAMAP-Rule" id="MF_00011"/>
    </source>
</evidence>
<proteinExistence type="inferred from homology"/>
<name>PURA_EHRRW</name>
<dbReference type="EC" id="6.3.4.4" evidence="1"/>
<dbReference type="EMBL" id="CR767821">
    <property type="protein sequence ID" value="CAH58292.1"/>
    <property type="molecule type" value="Genomic_DNA"/>
</dbReference>
<dbReference type="EMBL" id="CR925678">
    <property type="protein sequence ID" value="CAI27084.1"/>
    <property type="molecule type" value="Genomic_DNA"/>
</dbReference>
<dbReference type="RefSeq" id="WP_011155243.1">
    <property type="nucleotide sequence ID" value="NC_005295.2"/>
</dbReference>
<dbReference type="SMR" id="Q5HAW8"/>
<dbReference type="GeneID" id="33058088"/>
<dbReference type="KEGG" id="eru:Erum5630"/>
<dbReference type="KEGG" id="erw:ERWE_CDS_05900"/>
<dbReference type="eggNOG" id="COG0104">
    <property type="taxonomic scope" value="Bacteria"/>
</dbReference>
<dbReference type="HOGENOM" id="CLU_029848_0_0_5"/>
<dbReference type="UniPathway" id="UPA00075">
    <property type="reaction ID" value="UER00335"/>
</dbReference>
<dbReference type="Proteomes" id="UP000001021">
    <property type="component" value="Chromosome"/>
</dbReference>
<dbReference type="GO" id="GO:0005737">
    <property type="term" value="C:cytoplasm"/>
    <property type="evidence" value="ECO:0007669"/>
    <property type="project" value="UniProtKB-SubCell"/>
</dbReference>
<dbReference type="GO" id="GO:0004019">
    <property type="term" value="F:adenylosuccinate synthase activity"/>
    <property type="evidence" value="ECO:0007669"/>
    <property type="project" value="UniProtKB-UniRule"/>
</dbReference>
<dbReference type="GO" id="GO:0005525">
    <property type="term" value="F:GTP binding"/>
    <property type="evidence" value="ECO:0007669"/>
    <property type="project" value="UniProtKB-UniRule"/>
</dbReference>
<dbReference type="GO" id="GO:0000287">
    <property type="term" value="F:magnesium ion binding"/>
    <property type="evidence" value="ECO:0007669"/>
    <property type="project" value="UniProtKB-UniRule"/>
</dbReference>
<dbReference type="GO" id="GO:0044208">
    <property type="term" value="P:'de novo' AMP biosynthetic process"/>
    <property type="evidence" value="ECO:0007669"/>
    <property type="project" value="UniProtKB-UniRule"/>
</dbReference>
<dbReference type="GO" id="GO:0046040">
    <property type="term" value="P:IMP metabolic process"/>
    <property type="evidence" value="ECO:0007669"/>
    <property type="project" value="TreeGrafter"/>
</dbReference>
<dbReference type="CDD" id="cd03108">
    <property type="entry name" value="AdSS"/>
    <property type="match status" value="1"/>
</dbReference>
<dbReference type="FunFam" id="1.10.300.10:FF:000001">
    <property type="entry name" value="Adenylosuccinate synthetase"/>
    <property type="match status" value="1"/>
</dbReference>
<dbReference type="FunFam" id="3.90.170.10:FF:000001">
    <property type="entry name" value="Adenylosuccinate synthetase"/>
    <property type="match status" value="1"/>
</dbReference>
<dbReference type="Gene3D" id="3.40.440.10">
    <property type="entry name" value="Adenylosuccinate Synthetase, subunit A, domain 1"/>
    <property type="match status" value="1"/>
</dbReference>
<dbReference type="Gene3D" id="1.10.300.10">
    <property type="entry name" value="Adenylosuccinate Synthetase, subunit A, domain 2"/>
    <property type="match status" value="1"/>
</dbReference>
<dbReference type="Gene3D" id="3.90.170.10">
    <property type="entry name" value="Adenylosuccinate Synthetase, subunit A, domain 3"/>
    <property type="match status" value="1"/>
</dbReference>
<dbReference type="HAMAP" id="MF_00011">
    <property type="entry name" value="Adenylosucc_synth"/>
    <property type="match status" value="1"/>
</dbReference>
<dbReference type="InterPro" id="IPR018220">
    <property type="entry name" value="Adenylosuccin_syn_GTP-bd"/>
</dbReference>
<dbReference type="InterPro" id="IPR033128">
    <property type="entry name" value="Adenylosuccin_syn_Lys_AS"/>
</dbReference>
<dbReference type="InterPro" id="IPR042109">
    <property type="entry name" value="Adenylosuccinate_synth_dom1"/>
</dbReference>
<dbReference type="InterPro" id="IPR042110">
    <property type="entry name" value="Adenylosuccinate_synth_dom2"/>
</dbReference>
<dbReference type="InterPro" id="IPR042111">
    <property type="entry name" value="Adenylosuccinate_synth_dom3"/>
</dbReference>
<dbReference type="InterPro" id="IPR001114">
    <property type="entry name" value="Adenylosuccinate_synthetase"/>
</dbReference>
<dbReference type="InterPro" id="IPR027417">
    <property type="entry name" value="P-loop_NTPase"/>
</dbReference>
<dbReference type="NCBIfam" id="NF002223">
    <property type="entry name" value="PRK01117.1"/>
    <property type="match status" value="1"/>
</dbReference>
<dbReference type="NCBIfam" id="TIGR00184">
    <property type="entry name" value="purA"/>
    <property type="match status" value="1"/>
</dbReference>
<dbReference type="PANTHER" id="PTHR11846">
    <property type="entry name" value="ADENYLOSUCCINATE SYNTHETASE"/>
    <property type="match status" value="1"/>
</dbReference>
<dbReference type="PANTHER" id="PTHR11846:SF0">
    <property type="entry name" value="ADENYLOSUCCINATE SYNTHETASE"/>
    <property type="match status" value="1"/>
</dbReference>
<dbReference type="Pfam" id="PF00709">
    <property type="entry name" value="Adenylsucc_synt"/>
    <property type="match status" value="1"/>
</dbReference>
<dbReference type="SMART" id="SM00788">
    <property type="entry name" value="Adenylsucc_synt"/>
    <property type="match status" value="1"/>
</dbReference>
<dbReference type="SUPFAM" id="SSF52540">
    <property type="entry name" value="P-loop containing nucleoside triphosphate hydrolases"/>
    <property type="match status" value="1"/>
</dbReference>
<dbReference type="PROSITE" id="PS01266">
    <property type="entry name" value="ADENYLOSUCCIN_SYN_1"/>
    <property type="match status" value="1"/>
</dbReference>
<dbReference type="PROSITE" id="PS00513">
    <property type="entry name" value="ADENYLOSUCCIN_SYN_2"/>
    <property type="match status" value="1"/>
</dbReference>